<proteinExistence type="evidence at transcript level"/>
<gene>
    <name type="primary">LRP12</name>
    <name type="ORF">QnpA-21564</name>
</gene>
<keyword id="KW-0168">Coated pit</keyword>
<keyword id="KW-1015">Disulfide bond</keyword>
<keyword id="KW-0254">Endocytosis</keyword>
<keyword id="KW-0325">Glycoprotein</keyword>
<keyword id="KW-0472">Membrane</keyword>
<keyword id="KW-0675">Receptor</keyword>
<keyword id="KW-1185">Reference proteome</keyword>
<keyword id="KW-0677">Repeat</keyword>
<keyword id="KW-0812">Transmembrane</keyword>
<keyword id="KW-1133">Transmembrane helix</keyword>
<accession>Q9BE74</accession>
<feature type="chain" id="PRO_0000191078" description="Low-density lipoprotein receptor-related protein 12">
    <location>
        <begin position="1" status="less than"/>
        <end position="701"/>
    </location>
</feature>
<feature type="topological domain" description="Extracellular" evidence="2">
    <location>
        <begin position="1" status="less than"/>
        <end position="334"/>
    </location>
</feature>
<feature type="transmembrane region" description="Helical" evidence="2">
    <location>
        <begin position="335"/>
        <end position="355"/>
    </location>
</feature>
<feature type="topological domain" description="Cytoplasmic" evidence="2">
    <location>
        <begin position="356"/>
        <end position="701"/>
    </location>
</feature>
<feature type="domain" description="LDL-receptor class A 1" evidence="4">
    <location>
        <begin position="7"/>
        <end position="43"/>
    </location>
</feature>
<feature type="domain" description="LDL-receptor class A 2" evidence="4">
    <location>
        <begin position="56"/>
        <end position="97"/>
    </location>
</feature>
<feature type="domain" description="CUB" evidence="3">
    <location>
        <begin position="101"/>
        <end position="214"/>
    </location>
</feature>
<feature type="domain" description="LDL-receptor class A 3" evidence="4">
    <location>
        <begin position="216"/>
        <end position="253"/>
    </location>
</feature>
<feature type="domain" description="LDL-receptor class A 4" evidence="4">
    <location>
        <begin position="254"/>
        <end position="291"/>
    </location>
</feature>
<feature type="domain" description="LDL-receptor class A 5" evidence="4">
    <location>
        <begin position="292"/>
        <end position="328"/>
    </location>
</feature>
<feature type="region of interest" description="Disordered" evidence="5">
    <location>
        <begin position="465"/>
        <end position="520"/>
    </location>
</feature>
<feature type="region of interest" description="Disordered" evidence="5">
    <location>
        <begin position="535"/>
        <end position="565"/>
    </location>
</feature>
<feature type="region of interest" description="Disordered" evidence="5">
    <location>
        <begin position="590"/>
        <end position="612"/>
    </location>
</feature>
<feature type="region of interest" description="Disordered" evidence="5">
    <location>
        <begin position="643"/>
        <end position="665"/>
    </location>
</feature>
<feature type="compositionally biased region" description="Polar residues" evidence="5">
    <location>
        <begin position="590"/>
        <end position="599"/>
    </location>
</feature>
<feature type="compositionally biased region" description="Polar residues" evidence="5">
    <location>
        <begin position="643"/>
        <end position="656"/>
    </location>
</feature>
<feature type="glycosylation site" description="N-linked (GlcNAc...) asparagine" evidence="2">
    <location>
        <position position="126"/>
    </location>
</feature>
<feature type="glycosylation site" description="N-linked (GlcNAc...) asparagine" evidence="2">
    <location>
        <position position="208"/>
    </location>
</feature>
<feature type="glycosylation site" description="N-linked (GlcNAc...) asparagine" evidence="2">
    <location>
        <position position="251"/>
    </location>
</feature>
<feature type="glycosylation site" description="N-linked (GlcNAc...) asparagine" evidence="2">
    <location>
        <position position="283"/>
    </location>
</feature>
<feature type="disulfide bond" evidence="1">
    <location>
        <begin position="8"/>
        <end position="20"/>
    </location>
</feature>
<feature type="disulfide bond" evidence="1">
    <location>
        <begin position="15"/>
        <end position="33"/>
    </location>
</feature>
<feature type="disulfide bond" evidence="1">
    <location>
        <begin position="27"/>
        <end position="42"/>
    </location>
</feature>
<feature type="disulfide bond" evidence="1">
    <location>
        <begin position="57"/>
        <end position="74"/>
    </location>
</feature>
<feature type="disulfide bond" evidence="1">
    <location>
        <begin position="64"/>
        <end position="87"/>
    </location>
</feature>
<feature type="disulfide bond" evidence="1">
    <location>
        <begin position="81"/>
        <end position="96"/>
    </location>
</feature>
<feature type="disulfide bond" evidence="1">
    <location>
        <begin position="101"/>
        <end position="127"/>
    </location>
</feature>
<feature type="disulfide bond" evidence="1">
    <location>
        <begin position="217"/>
        <end position="230"/>
    </location>
</feature>
<feature type="disulfide bond" evidence="1">
    <location>
        <begin position="224"/>
        <end position="243"/>
    </location>
</feature>
<feature type="disulfide bond" evidence="1">
    <location>
        <begin position="237"/>
        <end position="252"/>
    </location>
</feature>
<feature type="disulfide bond" evidence="1">
    <location>
        <begin position="255"/>
        <end position="268"/>
    </location>
</feature>
<feature type="disulfide bond" evidence="1">
    <location>
        <begin position="262"/>
        <end position="281"/>
    </location>
</feature>
<feature type="disulfide bond" evidence="1">
    <location>
        <begin position="275"/>
        <end position="290"/>
    </location>
</feature>
<feature type="disulfide bond" evidence="1">
    <location>
        <begin position="293"/>
        <end position="305"/>
    </location>
</feature>
<feature type="disulfide bond" evidence="1">
    <location>
        <begin position="300"/>
        <end position="318"/>
    </location>
</feature>
<feature type="disulfide bond" evidence="1">
    <location>
        <begin position="312"/>
        <end position="327"/>
    </location>
</feature>
<feature type="non-terminal residue">
    <location>
        <position position="1"/>
    </location>
</feature>
<evidence type="ECO:0000250" key="1"/>
<evidence type="ECO:0000255" key="2"/>
<evidence type="ECO:0000255" key="3">
    <source>
        <dbReference type="PROSITE-ProRule" id="PRU00059"/>
    </source>
</evidence>
<evidence type="ECO:0000255" key="4">
    <source>
        <dbReference type="PROSITE-ProRule" id="PRU00124"/>
    </source>
</evidence>
<evidence type="ECO:0000256" key="5">
    <source>
        <dbReference type="SAM" id="MobiDB-lite"/>
    </source>
</evidence>
<evidence type="ECO:0000305" key="6"/>
<dbReference type="EMBL" id="AB056772">
    <property type="protein sequence ID" value="BAB39320.1"/>
    <property type="status" value="ALT_INIT"/>
    <property type="molecule type" value="mRNA"/>
</dbReference>
<dbReference type="SMR" id="Q9BE74"/>
<dbReference type="STRING" id="9541.ENSMFAP00000009963"/>
<dbReference type="GlyCosmos" id="Q9BE74">
    <property type="glycosylation" value="4 sites, No reported glycans"/>
</dbReference>
<dbReference type="eggNOG" id="KOG1215">
    <property type="taxonomic scope" value="Eukaryota"/>
</dbReference>
<dbReference type="Proteomes" id="UP000233100">
    <property type="component" value="Unplaced"/>
</dbReference>
<dbReference type="GO" id="GO:0005905">
    <property type="term" value="C:clathrin-coated pit"/>
    <property type="evidence" value="ECO:0007669"/>
    <property type="project" value="UniProtKB-KW"/>
</dbReference>
<dbReference type="GO" id="GO:0005886">
    <property type="term" value="C:plasma membrane"/>
    <property type="evidence" value="ECO:0007669"/>
    <property type="project" value="TreeGrafter"/>
</dbReference>
<dbReference type="GO" id="GO:0006897">
    <property type="term" value="P:endocytosis"/>
    <property type="evidence" value="ECO:0007669"/>
    <property type="project" value="UniProtKB-KW"/>
</dbReference>
<dbReference type="CDD" id="cd00041">
    <property type="entry name" value="CUB"/>
    <property type="match status" value="1"/>
</dbReference>
<dbReference type="CDD" id="cd00112">
    <property type="entry name" value="LDLa"/>
    <property type="match status" value="4"/>
</dbReference>
<dbReference type="FunFam" id="2.60.120.290:FF:000024">
    <property type="entry name" value="Low-density lipoprotein receptor-related protein 12"/>
    <property type="match status" value="1"/>
</dbReference>
<dbReference type="FunFam" id="4.10.400.10:FF:000063">
    <property type="entry name" value="low-density lipoprotein receptor-related protein 12"/>
    <property type="match status" value="1"/>
</dbReference>
<dbReference type="FunFam" id="4.10.400.10:FF:000040">
    <property type="entry name" value="low-density lipoprotein receptor-related protein 3"/>
    <property type="match status" value="1"/>
</dbReference>
<dbReference type="FunFam" id="4.10.400.10:FF:000003">
    <property type="entry name" value="Putative low-density lipoprotein receptor-related protein 12"/>
    <property type="match status" value="3"/>
</dbReference>
<dbReference type="Gene3D" id="4.10.400.10">
    <property type="entry name" value="Low-density Lipoprotein Receptor"/>
    <property type="match status" value="5"/>
</dbReference>
<dbReference type="Gene3D" id="2.60.120.290">
    <property type="entry name" value="Spermadhesin, CUB domain"/>
    <property type="match status" value="1"/>
</dbReference>
<dbReference type="InterPro" id="IPR000859">
    <property type="entry name" value="CUB_dom"/>
</dbReference>
<dbReference type="InterPro" id="IPR036055">
    <property type="entry name" value="LDL_receptor-like_sf"/>
</dbReference>
<dbReference type="InterPro" id="IPR050685">
    <property type="entry name" value="LDLR"/>
</dbReference>
<dbReference type="InterPro" id="IPR023415">
    <property type="entry name" value="LDLR_class-A_CS"/>
</dbReference>
<dbReference type="InterPro" id="IPR002172">
    <property type="entry name" value="LDrepeatLR_classA_rpt"/>
</dbReference>
<dbReference type="InterPro" id="IPR035914">
    <property type="entry name" value="Sperma_CUB_dom_sf"/>
</dbReference>
<dbReference type="PANTHER" id="PTHR24270">
    <property type="entry name" value="LOW-DENSITY LIPOPROTEIN RECEPTOR-RELATED"/>
    <property type="match status" value="1"/>
</dbReference>
<dbReference type="PANTHER" id="PTHR24270:SF47">
    <property type="entry name" value="LOW-DENSITY LIPOPROTEIN RECEPTOR-RELATED PROTEIN 12"/>
    <property type="match status" value="1"/>
</dbReference>
<dbReference type="Pfam" id="PF00431">
    <property type="entry name" value="CUB"/>
    <property type="match status" value="1"/>
</dbReference>
<dbReference type="Pfam" id="PF00057">
    <property type="entry name" value="Ldl_recept_a"/>
    <property type="match status" value="4"/>
</dbReference>
<dbReference type="PRINTS" id="PR00261">
    <property type="entry name" value="LDLRECEPTOR"/>
</dbReference>
<dbReference type="SMART" id="SM00042">
    <property type="entry name" value="CUB"/>
    <property type="match status" value="1"/>
</dbReference>
<dbReference type="SMART" id="SM00192">
    <property type="entry name" value="LDLa"/>
    <property type="match status" value="5"/>
</dbReference>
<dbReference type="SUPFAM" id="SSF57424">
    <property type="entry name" value="LDL receptor-like module"/>
    <property type="match status" value="5"/>
</dbReference>
<dbReference type="SUPFAM" id="SSF49854">
    <property type="entry name" value="Spermadhesin, CUB domain"/>
    <property type="match status" value="1"/>
</dbReference>
<dbReference type="PROSITE" id="PS01180">
    <property type="entry name" value="CUB"/>
    <property type="match status" value="1"/>
</dbReference>
<dbReference type="PROSITE" id="PS01209">
    <property type="entry name" value="LDLRA_1"/>
    <property type="match status" value="2"/>
</dbReference>
<dbReference type="PROSITE" id="PS50068">
    <property type="entry name" value="LDLRA_2"/>
    <property type="match status" value="5"/>
</dbReference>
<name>LRP12_MACFA</name>
<protein>
    <recommendedName>
        <fullName>Low-density lipoprotein receptor-related protein 12</fullName>
        <shortName>LRP-12</shortName>
    </recommendedName>
</protein>
<organism>
    <name type="scientific">Macaca fascicularis</name>
    <name type="common">Crab-eating macaque</name>
    <name type="synonym">Cynomolgus monkey</name>
    <dbReference type="NCBI Taxonomy" id="9541"/>
    <lineage>
        <taxon>Eukaryota</taxon>
        <taxon>Metazoa</taxon>
        <taxon>Chordata</taxon>
        <taxon>Craniata</taxon>
        <taxon>Vertebrata</taxon>
        <taxon>Euteleostomi</taxon>
        <taxon>Mammalia</taxon>
        <taxon>Eutheria</taxon>
        <taxon>Euarchontoglires</taxon>
        <taxon>Primates</taxon>
        <taxon>Haplorrhini</taxon>
        <taxon>Catarrhini</taxon>
        <taxon>Cercopithecidae</taxon>
        <taxon>Cercopithecinae</taxon>
        <taxon>Macaca</taxon>
    </lineage>
</organism>
<sequence>GKSEEPNCACDQFRCGNGKCIPEAWKCNNMDECGDSSDEEICAKEANPPTATAFQPCAYNQFQCLSRFTKVYTCLAESLKCDGNIDCLDLGDEIDCDVPTCGQWLKYFYGTFNSPNYPDFYPPGSNCTWLIDTGDHRKVILCFTDFKLDGTGYGDYVKIYDGLEENPHKLLRVLTAFDSHAPLTVVSSSGQIRVHFCADKVNAARGFNATYQVDGFCLPWEIPCGGNWGCYTEQQRCDGYWHCPNGRDEINCTMCQKEEFPCSRNGVCYPRSDRCNYQNHCPNGSDEKNCFFCQPGNFHCKNNRCVFESWVCDSQDDCGDGSDEENCPVIVPTRVITAAVIGSLICGLLLVIALGCTCKLYSLRMFERRSFETQLSRVEAELLRREAPPSYGQLIAQGLIPPVEDFPVCSPNQASVLENLRLAVRSQLGFTSVRLPMAGRSSNIWNRIFNFARSRHSGSLALVSADGDEVVPSQSTSREPERNHTHRSLFSVESDDTDTENERRDTAGASGGVAAPLPQKVPPTTAVEATVGACASSSTQSARGGHADNGRDVTSVEPPSVSPARHQLTSALSRMTQGLRWVRFTLGRSSSVSQNQSPLRQLDNGVSGREDDDDVEMLIPVSDGSSDFDVNDCSRPLLDLASDQGQGLRQPYSATNPGVRPSNRDGPCERCGIVHTAQIPDTCLEVTLKNETSDDEALLLC</sequence>
<comment type="function">
    <text evidence="1">Probable receptor, which may be involved in the internalization of lipophilic molecules and/or signal transduction. May act as a tumor suppressor (By similarity).</text>
</comment>
<comment type="subunit">
    <text evidence="1">May interact with RACK1, ZFYVE9 and NMRK2.</text>
</comment>
<comment type="subcellular location">
    <subcellularLocation>
        <location evidence="1">Membrane</location>
        <topology evidence="1">Single-pass type I membrane protein</topology>
    </subcellularLocation>
    <subcellularLocation>
        <location evidence="1">Membrane</location>
        <location evidence="1">Coated pit</location>
    </subcellularLocation>
</comment>
<comment type="similarity">
    <text evidence="6">Belongs to the LDLR family.</text>
</comment>
<comment type="sequence caution" evidence="6">
    <conflict type="erroneous initiation">
        <sequence resource="EMBL-CDS" id="BAB39320"/>
    </conflict>
</comment>
<reference key="1">
    <citation type="submission" date="2001-03" db="EMBL/GenBank/DDBJ databases">
        <title>Isolation of full-length cDNA clones from macaque brain cDNA libraries.</title>
        <authorList>
            <person name="Osada N."/>
            <person name="Hida M."/>
            <person name="Kusuda J."/>
            <person name="Tanuma R."/>
            <person name="Iseki K."/>
            <person name="Hirai M."/>
            <person name="Terao K."/>
            <person name="Suzuki Y."/>
            <person name="Sugano S."/>
            <person name="Hashimoto K."/>
        </authorList>
    </citation>
    <scope>NUCLEOTIDE SEQUENCE [LARGE SCALE MRNA]</scope>
    <source>
        <tissue>Parietal cortex</tissue>
    </source>
</reference>